<comment type="function">
    <text evidence="2">With S4 and S5 plays an important role in translational accuracy.</text>
</comment>
<comment type="function">
    <text evidence="2">Interacts with and stabilizes bases of the 16S rRNA that are involved in tRNA selection in the A site and with the mRNA backbone. Located at the interface of the 30S and 50S subunits, it traverses the body of the 30S subunit contacting proteins on the other side and probably holding the rRNA structure together. The combined cluster of proteins S8, S12 and S17 appears to hold together the shoulder and platform of the 30S subunit.</text>
</comment>
<comment type="subunit">
    <text evidence="2">Part of the 30S ribosomal subunit. Contacts proteins S8 and S17. May interact with IF1 in the 30S initiation complex.</text>
</comment>
<comment type="similarity">
    <text evidence="2">Belongs to the universal ribosomal protein uS12 family.</text>
</comment>
<evidence type="ECO:0000250" key="1"/>
<evidence type="ECO:0000255" key="2">
    <source>
        <dbReference type="HAMAP-Rule" id="MF_00403"/>
    </source>
</evidence>
<evidence type="ECO:0000256" key="3">
    <source>
        <dbReference type="SAM" id="MobiDB-lite"/>
    </source>
</evidence>
<evidence type="ECO:0000305" key="4"/>
<feature type="chain" id="PRO_1000194101" description="Small ribosomal subunit protein uS12">
    <location>
        <begin position="1"/>
        <end position="123"/>
    </location>
</feature>
<feature type="region of interest" description="Disordered" evidence="3">
    <location>
        <begin position="1"/>
        <end position="26"/>
    </location>
</feature>
<feature type="region of interest" description="Disordered" evidence="3">
    <location>
        <begin position="104"/>
        <end position="123"/>
    </location>
</feature>
<feature type="compositionally biased region" description="Basic residues" evidence="3">
    <location>
        <begin position="108"/>
        <end position="123"/>
    </location>
</feature>
<feature type="modified residue" description="3-methylthioaspartic acid" evidence="1">
    <location>
        <position position="89"/>
    </location>
</feature>
<organism>
    <name type="scientific">Acidithiobacillus ferrooxidans (strain ATCC 53993 / BNL-5-31)</name>
    <name type="common">Leptospirillum ferrooxidans (ATCC 53993)</name>
    <dbReference type="NCBI Taxonomy" id="380394"/>
    <lineage>
        <taxon>Bacteria</taxon>
        <taxon>Pseudomonadati</taxon>
        <taxon>Pseudomonadota</taxon>
        <taxon>Acidithiobacillia</taxon>
        <taxon>Acidithiobacillales</taxon>
        <taxon>Acidithiobacillaceae</taxon>
        <taxon>Acidithiobacillus</taxon>
    </lineage>
</organism>
<dbReference type="EMBL" id="CP001132">
    <property type="protein sequence ID" value="ACH82746.1"/>
    <property type="molecule type" value="Genomic_DNA"/>
</dbReference>
<dbReference type="RefSeq" id="WP_010641426.1">
    <property type="nucleotide sequence ID" value="NC_011206.1"/>
</dbReference>
<dbReference type="SMR" id="B5ELX4"/>
<dbReference type="GeneID" id="89663798"/>
<dbReference type="KEGG" id="afe:Lferr_0492"/>
<dbReference type="eggNOG" id="COG0048">
    <property type="taxonomic scope" value="Bacteria"/>
</dbReference>
<dbReference type="HOGENOM" id="CLU_104295_1_2_6"/>
<dbReference type="GO" id="GO:0015935">
    <property type="term" value="C:small ribosomal subunit"/>
    <property type="evidence" value="ECO:0007669"/>
    <property type="project" value="InterPro"/>
</dbReference>
<dbReference type="GO" id="GO:0019843">
    <property type="term" value="F:rRNA binding"/>
    <property type="evidence" value="ECO:0007669"/>
    <property type="project" value="UniProtKB-UniRule"/>
</dbReference>
<dbReference type="GO" id="GO:0003735">
    <property type="term" value="F:structural constituent of ribosome"/>
    <property type="evidence" value="ECO:0007669"/>
    <property type="project" value="InterPro"/>
</dbReference>
<dbReference type="GO" id="GO:0000049">
    <property type="term" value="F:tRNA binding"/>
    <property type="evidence" value="ECO:0007669"/>
    <property type="project" value="UniProtKB-UniRule"/>
</dbReference>
<dbReference type="GO" id="GO:0006412">
    <property type="term" value="P:translation"/>
    <property type="evidence" value="ECO:0007669"/>
    <property type="project" value="UniProtKB-UniRule"/>
</dbReference>
<dbReference type="CDD" id="cd03368">
    <property type="entry name" value="Ribosomal_S12"/>
    <property type="match status" value="1"/>
</dbReference>
<dbReference type="FunFam" id="2.40.50.140:FF:000001">
    <property type="entry name" value="30S ribosomal protein S12"/>
    <property type="match status" value="1"/>
</dbReference>
<dbReference type="Gene3D" id="2.40.50.140">
    <property type="entry name" value="Nucleic acid-binding proteins"/>
    <property type="match status" value="1"/>
</dbReference>
<dbReference type="HAMAP" id="MF_00403_B">
    <property type="entry name" value="Ribosomal_uS12_B"/>
    <property type="match status" value="1"/>
</dbReference>
<dbReference type="InterPro" id="IPR012340">
    <property type="entry name" value="NA-bd_OB-fold"/>
</dbReference>
<dbReference type="InterPro" id="IPR006032">
    <property type="entry name" value="Ribosomal_uS12"/>
</dbReference>
<dbReference type="InterPro" id="IPR005679">
    <property type="entry name" value="Ribosomal_uS12_bac"/>
</dbReference>
<dbReference type="NCBIfam" id="TIGR00981">
    <property type="entry name" value="rpsL_bact"/>
    <property type="match status" value="1"/>
</dbReference>
<dbReference type="PANTHER" id="PTHR11652">
    <property type="entry name" value="30S RIBOSOMAL PROTEIN S12 FAMILY MEMBER"/>
    <property type="match status" value="1"/>
</dbReference>
<dbReference type="Pfam" id="PF00164">
    <property type="entry name" value="Ribosom_S12_S23"/>
    <property type="match status" value="1"/>
</dbReference>
<dbReference type="PIRSF" id="PIRSF002133">
    <property type="entry name" value="Ribosomal_S12/S23"/>
    <property type="match status" value="1"/>
</dbReference>
<dbReference type="PRINTS" id="PR01034">
    <property type="entry name" value="RIBOSOMALS12"/>
</dbReference>
<dbReference type="SUPFAM" id="SSF50249">
    <property type="entry name" value="Nucleic acid-binding proteins"/>
    <property type="match status" value="1"/>
</dbReference>
<dbReference type="PROSITE" id="PS00055">
    <property type="entry name" value="RIBOSOMAL_S12"/>
    <property type="match status" value="1"/>
</dbReference>
<proteinExistence type="inferred from homology"/>
<protein>
    <recommendedName>
        <fullName evidence="2">Small ribosomal subunit protein uS12</fullName>
    </recommendedName>
    <alternativeName>
        <fullName evidence="4">30S ribosomal protein S12</fullName>
    </alternativeName>
</protein>
<accession>B5ELX4</accession>
<gene>
    <name evidence="2" type="primary">rpsL</name>
    <name type="ordered locus">Lferr_0492</name>
</gene>
<reference key="1">
    <citation type="submission" date="2008-08" db="EMBL/GenBank/DDBJ databases">
        <title>Complete sequence of Acidithiobacillus ferrooxidans ATCC 53993.</title>
        <authorList>
            <person name="Lucas S."/>
            <person name="Copeland A."/>
            <person name="Lapidus A."/>
            <person name="Glavina del Rio T."/>
            <person name="Dalin E."/>
            <person name="Tice H."/>
            <person name="Bruce D."/>
            <person name="Goodwin L."/>
            <person name="Pitluck S."/>
            <person name="Sims D."/>
            <person name="Brettin T."/>
            <person name="Detter J.C."/>
            <person name="Han C."/>
            <person name="Kuske C.R."/>
            <person name="Larimer F."/>
            <person name="Land M."/>
            <person name="Hauser L."/>
            <person name="Kyrpides N."/>
            <person name="Lykidis A."/>
            <person name="Borole A.P."/>
        </authorList>
    </citation>
    <scope>NUCLEOTIDE SEQUENCE [LARGE SCALE GENOMIC DNA]</scope>
    <source>
        <strain>ATCC 53993 / BNL-5-31</strain>
    </source>
</reference>
<sequence length="123" mass="13734">MPTLNQLVRKPRKRPVAKSKVPALDANPQKRGVCTRVYTTTPKKPNSALRKVARVRLTNGFEVSSYIPGEGHNLQEHSVVLIRGGRVKDLPGVRYHIVRGTLDTAGVKNRKQSRSKYGAKRPK</sequence>
<keyword id="KW-0488">Methylation</keyword>
<keyword id="KW-0687">Ribonucleoprotein</keyword>
<keyword id="KW-0689">Ribosomal protein</keyword>
<keyword id="KW-0694">RNA-binding</keyword>
<keyword id="KW-0699">rRNA-binding</keyword>
<keyword id="KW-0820">tRNA-binding</keyword>
<name>RS12_ACIF5</name>